<name>AR2BP_DANRE</name>
<organism>
    <name type="scientific">Danio rerio</name>
    <name type="common">Zebrafish</name>
    <name type="synonym">Brachydanio rerio</name>
    <dbReference type="NCBI Taxonomy" id="7955"/>
    <lineage>
        <taxon>Eukaryota</taxon>
        <taxon>Metazoa</taxon>
        <taxon>Chordata</taxon>
        <taxon>Craniata</taxon>
        <taxon>Vertebrata</taxon>
        <taxon>Euteleostomi</taxon>
        <taxon>Actinopterygii</taxon>
        <taxon>Neopterygii</taxon>
        <taxon>Teleostei</taxon>
        <taxon>Ostariophysi</taxon>
        <taxon>Cypriniformes</taxon>
        <taxon>Danionidae</taxon>
        <taxon>Danioninae</taxon>
        <taxon>Danio</taxon>
    </lineage>
</organism>
<evidence type="ECO:0000250" key="1"/>
<evidence type="ECO:0000305" key="2"/>
<evidence type="ECO:0007829" key="3">
    <source>
        <dbReference type="PDB" id="2K0S"/>
    </source>
</evidence>
<accession>Q7SYL1</accession>
<accession>Q6NYS0</accession>
<dbReference type="EMBL" id="BC054678">
    <property type="protein sequence ID" value="AAH54678.1"/>
    <property type="status" value="ALT_INIT"/>
    <property type="molecule type" value="mRNA"/>
</dbReference>
<dbReference type="EMBL" id="BC066483">
    <property type="protein sequence ID" value="AAH66483.2"/>
    <property type="status" value="ALT_INIT"/>
    <property type="molecule type" value="mRNA"/>
</dbReference>
<dbReference type="RefSeq" id="XP_009291821.1">
    <property type="nucleotide sequence ID" value="XM_009293546.2"/>
</dbReference>
<dbReference type="PDB" id="2K0S">
    <property type="method" value="NMR"/>
    <property type="chains" value="A=19-139"/>
</dbReference>
<dbReference type="PDBsum" id="2K0S"/>
<dbReference type="SMR" id="Q7SYL1"/>
<dbReference type="FunCoup" id="Q7SYL1">
    <property type="interactions" value="459"/>
</dbReference>
<dbReference type="STRING" id="7955.ENSDARP00000110496"/>
<dbReference type="PaxDb" id="7955-ENSDARP00000110496"/>
<dbReference type="DNASU" id="393976"/>
<dbReference type="AGR" id="ZFIN:ZDB-GENE-040426-1604"/>
<dbReference type="ZFIN" id="ZDB-GENE-040426-1604">
    <property type="gene designation" value="arl2bp"/>
</dbReference>
<dbReference type="eggNOG" id="ENOG502RYJD">
    <property type="taxonomic scope" value="Eukaryota"/>
</dbReference>
<dbReference type="InParanoid" id="Q7SYL1"/>
<dbReference type="PhylomeDB" id="Q7SYL1"/>
<dbReference type="Reactome" id="R-DRE-83936">
    <property type="pathway name" value="Transport of nucleosides and free purine and pyrimidine bases across the plasma membrane"/>
</dbReference>
<dbReference type="EvolutionaryTrace" id="Q7SYL1"/>
<dbReference type="PRO" id="PR:Q7SYL1"/>
<dbReference type="Proteomes" id="UP000000437">
    <property type="component" value="Unplaced"/>
</dbReference>
<dbReference type="GO" id="GO:0005813">
    <property type="term" value="C:centrosome"/>
    <property type="evidence" value="ECO:0007669"/>
    <property type="project" value="UniProtKB-SubCell"/>
</dbReference>
<dbReference type="GO" id="GO:0005929">
    <property type="term" value="C:cilium"/>
    <property type="evidence" value="ECO:0007669"/>
    <property type="project" value="UniProtKB-KW"/>
</dbReference>
<dbReference type="GO" id="GO:0005758">
    <property type="term" value="C:mitochondrial intermembrane space"/>
    <property type="evidence" value="ECO:0000318"/>
    <property type="project" value="GO_Central"/>
</dbReference>
<dbReference type="GO" id="GO:0005634">
    <property type="term" value="C:nucleus"/>
    <property type="evidence" value="ECO:0007669"/>
    <property type="project" value="UniProtKB-SubCell"/>
</dbReference>
<dbReference type="GO" id="GO:0005819">
    <property type="term" value="C:spindle"/>
    <property type="evidence" value="ECO:0007669"/>
    <property type="project" value="UniProtKB-SubCell"/>
</dbReference>
<dbReference type="Gene3D" id="1.20.1520.10">
    <property type="entry name" value="ADP-ribosylation factor-like 2-binding protein, domain"/>
    <property type="match status" value="1"/>
</dbReference>
<dbReference type="InterPro" id="IPR038849">
    <property type="entry name" value="ARL2BP"/>
</dbReference>
<dbReference type="InterPro" id="IPR023379">
    <property type="entry name" value="BART_dom"/>
</dbReference>
<dbReference type="InterPro" id="IPR042541">
    <property type="entry name" value="BART_sf"/>
</dbReference>
<dbReference type="PANTHER" id="PTHR15487">
    <property type="entry name" value="ADP-RIBOSYLATION FACTOR-LIKE PROTEIN 2-BINDING PROTEIN"/>
    <property type="match status" value="1"/>
</dbReference>
<dbReference type="PANTHER" id="PTHR15487:SF4">
    <property type="entry name" value="ADP-RIBOSYLATION FACTOR-LIKE PROTEIN 2-BINDING PROTEIN"/>
    <property type="match status" value="1"/>
</dbReference>
<dbReference type="Pfam" id="PF11527">
    <property type="entry name" value="ARL2_Bind_BART"/>
    <property type="match status" value="1"/>
</dbReference>
<feature type="chain" id="PRO_0000287119" description="ADP-ribosylation factor-like protein 2-binding protein">
    <location>
        <begin position="1"/>
        <end position="168"/>
    </location>
</feature>
<feature type="helix" evidence="3">
    <location>
        <begin position="22"/>
        <end position="34"/>
    </location>
</feature>
<feature type="helix" evidence="3">
    <location>
        <begin position="38"/>
        <end position="53"/>
    </location>
</feature>
<feature type="helix" evidence="3">
    <location>
        <begin position="65"/>
        <end position="85"/>
    </location>
</feature>
<feature type="strand" evidence="3">
    <location>
        <begin position="90"/>
        <end position="92"/>
    </location>
</feature>
<feature type="helix" evidence="3">
    <location>
        <begin position="96"/>
        <end position="100"/>
    </location>
</feature>
<feature type="helix" evidence="3">
    <location>
        <begin position="104"/>
        <end position="106"/>
    </location>
</feature>
<feature type="helix" evidence="3">
    <location>
        <begin position="109"/>
        <end position="116"/>
    </location>
</feature>
<feature type="helix" evidence="3">
    <location>
        <begin position="117"/>
        <end position="119"/>
    </location>
</feature>
<feature type="helix" evidence="3">
    <location>
        <begin position="121"/>
        <end position="136"/>
    </location>
</feature>
<reference key="1">
    <citation type="submission" date="2003-07" db="EMBL/GenBank/DDBJ databases">
        <authorList>
            <consortium name="NIH - Zebrafish Gene Collection (ZGC) project"/>
        </authorList>
    </citation>
    <scope>NUCLEOTIDE SEQUENCE [LARGE SCALE MRNA]</scope>
    <source>
        <tissue>Kidney</tissue>
    </source>
</reference>
<comment type="function">
    <text evidence="1">Plays a role as an effector of the ADP-ribosylation factor-like protein 2, ARL2.</text>
</comment>
<comment type="subcellular location">
    <subcellularLocation>
        <location evidence="1">Cytoplasm</location>
    </subcellularLocation>
    <subcellularLocation>
        <location evidence="1">Mitochondrion intermembrane space</location>
    </subcellularLocation>
    <subcellularLocation>
        <location evidence="1">Cytoplasm</location>
        <location evidence="1">Cytoskeleton</location>
        <location evidence="1">Microtubule organizing center</location>
        <location evidence="1">Centrosome</location>
    </subcellularLocation>
    <subcellularLocation>
        <location evidence="1">Nucleus</location>
    </subcellularLocation>
    <subcellularLocation>
        <location evidence="1">Cytoplasm</location>
        <location evidence="1">Cytoskeleton</location>
        <location evidence="1">Spindle</location>
    </subcellularLocation>
    <subcellularLocation>
        <location evidence="1">Cytoplasm</location>
        <location evidence="1">Cytoskeleton</location>
        <location evidence="1">Cilium basal body</location>
    </subcellularLocation>
    <text evidence="1">Detected in the midbody matrix. Not detected in the Golgi, nucleus and on the mitotic spindle. Centrosome-associated throughout the cell cycle. Not detected to interphase microtubules. The complex formed with ARL2BP, ARL2 and SLC25A4 is expressed in mitochondria (By similarity).</text>
</comment>
<comment type="similarity">
    <text evidence="2">Belongs to the ARL2BP family.</text>
</comment>
<comment type="caution">
    <text evidence="2">It is uncertain whether Met-1 or Met-4 is the initiator.</text>
</comment>
<comment type="sequence caution" evidence="2">
    <conflict type="erroneous initiation">
        <sequence resource="EMBL-CDS" id="AAH54678"/>
    </conflict>
    <text>Truncated N-terminus.</text>
</comment>
<comment type="sequence caution" evidence="2">
    <conflict type="erroneous initiation">
        <sequence resource="EMBL-CDS" id="AAH66483"/>
    </conflict>
    <text>Truncated N-terminus.</text>
</comment>
<gene>
    <name type="primary">arl2bp</name>
</gene>
<protein>
    <recommendedName>
        <fullName>ADP-ribosylation factor-like protein 2-binding protein</fullName>
        <shortName>ARF-like 2-binding protein</shortName>
    </recommendedName>
</protein>
<keyword id="KW-0002">3D-structure</keyword>
<keyword id="KW-0966">Cell projection</keyword>
<keyword id="KW-0969">Cilium</keyword>
<keyword id="KW-0963">Cytoplasm</keyword>
<keyword id="KW-0206">Cytoskeleton</keyword>
<keyword id="KW-0496">Mitochondrion</keyword>
<keyword id="KW-0539">Nucleus</keyword>
<keyword id="KW-1185">Reference proteome</keyword>
<proteinExistence type="evidence at protein level"/>
<sequence length="168" mass="19296">MVDMQSLDEEDFSVSKSSDADAEFDIVIGNIEDIIMEDEFQHLQQSFMEKYYLEFDDSEENKLSYTPIFNEYIEILEKHLEQQLVERIPGFNMDAFTHSLKQHKDEVSGDILDMLLTFTDFMAFKEMFTDYRAEKEGRGLDLSTGLVVKSLNSSSASPLTPSMASQSI</sequence>